<keyword id="KW-0025">Alternative splicing</keyword>
<keyword id="KW-0343">GTPase activation</keyword>
<keyword id="KW-0472">Membrane</keyword>
<keyword id="KW-0597">Phosphoprotein</keyword>
<keyword id="KW-1185">Reference proteome</keyword>
<keyword id="KW-0677">Repeat</keyword>
<keyword id="KW-0812">Transmembrane</keyword>
<keyword id="KW-1133">Transmembrane helix</keyword>
<name>TBC9B_MOUSE</name>
<comment type="function">
    <text>May act as a GTPase-activating protein for Rab family protein(s).</text>
</comment>
<comment type="subcellular location">
    <subcellularLocation>
        <location evidence="9">Membrane</location>
        <topology evidence="9">Single-pass membrane protein</topology>
    </subcellularLocation>
</comment>
<comment type="alternative products">
    <event type="alternative splicing"/>
    <isoform>
        <id>Q5SVR0-1</id>
        <name>1</name>
        <sequence type="displayed"/>
    </isoform>
    <isoform>
        <id>Q5SVR0-2</id>
        <name>2</name>
        <sequence type="described" ref="VSP_025700"/>
    </isoform>
</comment>
<comment type="domain">
    <text evidence="1">The arginine and glutamine fingers are critical for the GTPase-activating mechanism, they pull out Rab's 'switch 2' glutamine and insert in Rab's active site.</text>
</comment>
<comment type="sequence caution" evidence="9">
    <conflict type="erroneous initiation">
        <sequence resource="EMBL-CDS" id="BAC27640"/>
    </conflict>
</comment>
<comment type="sequence caution" evidence="9">
    <conflict type="erroneous initiation">
        <sequence resource="EMBL-CDS" id="BAD32277"/>
    </conflict>
</comment>
<organism>
    <name type="scientific">Mus musculus</name>
    <name type="common">Mouse</name>
    <dbReference type="NCBI Taxonomy" id="10090"/>
    <lineage>
        <taxon>Eukaryota</taxon>
        <taxon>Metazoa</taxon>
        <taxon>Chordata</taxon>
        <taxon>Craniata</taxon>
        <taxon>Vertebrata</taxon>
        <taxon>Euteleostomi</taxon>
        <taxon>Mammalia</taxon>
        <taxon>Eutheria</taxon>
        <taxon>Euarchontoglires</taxon>
        <taxon>Glires</taxon>
        <taxon>Rodentia</taxon>
        <taxon>Myomorpha</taxon>
        <taxon>Muroidea</taxon>
        <taxon>Muridae</taxon>
        <taxon>Murinae</taxon>
        <taxon>Mus</taxon>
        <taxon>Mus</taxon>
    </lineage>
</organism>
<evidence type="ECO:0000250" key="1"/>
<evidence type="ECO:0000250" key="2">
    <source>
        <dbReference type="UniProtKB" id="Q66K14"/>
    </source>
</evidence>
<evidence type="ECO:0000255" key="3"/>
<evidence type="ECO:0000255" key="4">
    <source>
        <dbReference type="PROSITE-ProRule" id="PRU00163"/>
    </source>
</evidence>
<evidence type="ECO:0000255" key="5">
    <source>
        <dbReference type="PROSITE-ProRule" id="PRU00448"/>
    </source>
</evidence>
<evidence type="ECO:0000256" key="6">
    <source>
        <dbReference type="SAM" id="MobiDB-lite"/>
    </source>
</evidence>
<evidence type="ECO:0000303" key="7">
    <source>
    </source>
</evidence>
<evidence type="ECO:0000303" key="8">
    <source>
    </source>
</evidence>
<evidence type="ECO:0000305" key="9"/>
<evidence type="ECO:0007744" key="10">
    <source>
    </source>
</evidence>
<dbReference type="EMBL" id="AK172999">
    <property type="protein sequence ID" value="BAD32277.1"/>
    <property type="status" value="ALT_INIT"/>
    <property type="molecule type" value="mRNA"/>
</dbReference>
<dbReference type="EMBL" id="AK012224">
    <property type="protein sequence ID" value="BAB28107.1"/>
    <property type="molecule type" value="mRNA"/>
</dbReference>
<dbReference type="EMBL" id="AK031992">
    <property type="protein sequence ID" value="BAC27640.1"/>
    <property type="status" value="ALT_INIT"/>
    <property type="molecule type" value="mRNA"/>
</dbReference>
<dbReference type="EMBL" id="AK035457">
    <property type="protein sequence ID" value="BAC29068.1"/>
    <property type="molecule type" value="mRNA"/>
</dbReference>
<dbReference type="EMBL" id="AK049999">
    <property type="protein sequence ID" value="BAC34024.2"/>
    <property type="molecule type" value="mRNA"/>
</dbReference>
<dbReference type="EMBL" id="AK147964">
    <property type="protein sequence ID" value="BAE28254.1"/>
    <property type="molecule type" value="mRNA"/>
</dbReference>
<dbReference type="EMBL" id="AL627187">
    <property type="status" value="NOT_ANNOTATED_CDS"/>
    <property type="molecule type" value="Genomic_DNA"/>
</dbReference>
<dbReference type="EMBL" id="BC048085">
    <property type="protein sequence ID" value="AAH48085.1"/>
    <property type="molecule type" value="mRNA"/>
</dbReference>
<dbReference type="EMBL" id="BC058596">
    <property type="protein sequence ID" value="AAH58596.1"/>
    <property type="molecule type" value="mRNA"/>
</dbReference>
<dbReference type="EMBL" id="BC062928">
    <property type="protein sequence ID" value="AAH62928.1"/>
    <property type="molecule type" value="mRNA"/>
</dbReference>
<dbReference type="EMBL" id="BC065080">
    <property type="protein sequence ID" value="AAH65080.1"/>
    <property type="molecule type" value="mRNA"/>
</dbReference>
<dbReference type="CCDS" id="CCDS36146.1">
    <molecule id="Q5SVR0-2"/>
</dbReference>
<dbReference type="CCDS" id="CCDS70175.1">
    <molecule id="Q5SVR0-1"/>
</dbReference>
<dbReference type="RefSeq" id="NP_001277688.1">
    <property type="nucleotide sequence ID" value="NM_001290759.1"/>
</dbReference>
<dbReference type="RefSeq" id="NP_001277689.1">
    <molecule id="Q5SVR0-1"/>
    <property type="nucleotide sequence ID" value="NM_001290760.1"/>
</dbReference>
<dbReference type="RefSeq" id="NP_084021.2">
    <molecule id="Q5SVR0-2"/>
    <property type="nucleotide sequence ID" value="NM_029745.2"/>
</dbReference>
<dbReference type="SMR" id="Q5SVR0"/>
<dbReference type="BioGRID" id="218320">
    <property type="interactions" value="6"/>
</dbReference>
<dbReference type="FunCoup" id="Q5SVR0">
    <property type="interactions" value="3090"/>
</dbReference>
<dbReference type="IntAct" id="Q5SVR0">
    <property type="interactions" value="2"/>
</dbReference>
<dbReference type="MINT" id="Q5SVR0"/>
<dbReference type="STRING" id="10090.ENSMUSP00000098828"/>
<dbReference type="GlyGen" id="Q5SVR0">
    <property type="glycosylation" value="4 sites, 1 N-linked glycan (1 site), 1 O-linked glycan (3 sites)"/>
</dbReference>
<dbReference type="iPTMnet" id="Q5SVR0"/>
<dbReference type="PhosphoSitePlus" id="Q5SVR0"/>
<dbReference type="SwissPalm" id="Q5SVR0"/>
<dbReference type="jPOST" id="Q5SVR0"/>
<dbReference type="PaxDb" id="10090-ENSMUSP00000090825"/>
<dbReference type="PeptideAtlas" id="Q5SVR0"/>
<dbReference type="ProteomicsDB" id="254655">
    <molecule id="Q5SVR0-1"/>
</dbReference>
<dbReference type="ProteomicsDB" id="254656">
    <molecule id="Q5SVR0-2"/>
</dbReference>
<dbReference type="Pumba" id="Q5SVR0"/>
<dbReference type="Antibodypedia" id="50209">
    <property type="antibodies" value="55 antibodies from 13 providers"/>
</dbReference>
<dbReference type="Ensembl" id="ENSMUST00000093138.13">
    <molecule id="Q5SVR0-2"/>
    <property type="protein sequence ID" value="ENSMUSP00000090825.7"/>
    <property type="gene ID" value="ENSMUSG00000036644.16"/>
</dbReference>
<dbReference type="Ensembl" id="ENSMUST00000101270.5">
    <molecule id="Q5SVR0-1"/>
    <property type="protein sequence ID" value="ENSMUSP00000098828.5"/>
    <property type="gene ID" value="ENSMUSG00000036644.16"/>
</dbReference>
<dbReference type="GeneID" id="76795"/>
<dbReference type="KEGG" id="mmu:76795"/>
<dbReference type="UCSC" id="uc007irp.2">
    <molecule id="Q5SVR0-1"/>
    <property type="organism name" value="mouse"/>
</dbReference>
<dbReference type="UCSC" id="uc007irq.1">
    <molecule id="Q5SVR0-2"/>
    <property type="organism name" value="mouse"/>
</dbReference>
<dbReference type="AGR" id="MGI:1924045"/>
<dbReference type="CTD" id="23061"/>
<dbReference type="MGI" id="MGI:1924045">
    <property type="gene designation" value="Tbc1d9b"/>
</dbReference>
<dbReference type="VEuPathDB" id="HostDB:ENSMUSG00000036644"/>
<dbReference type="eggNOG" id="KOG4347">
    <property type="taxonomic scope" value="Eukaryota"/>
</dbReference>
<dbReference type="GeneTree" id="ENSGT00940000158554"/>
<dbReference type="HOGENOM" id="CLU_003535_0_1_1"/>
<dbReference type="InParanoid" id="Q5SVR0"/>
<dbReference type="OMA" id="CTGEVPT"/>
<dbReference type="OrthoDB" id="17687at2759"/>
<dbReference type="PhylomeDB" id="Q5SVR0"/>
<dbReference type="TreeFam" id="TF313145"/>
<dbReference type="BioGRID-ORCS" id="76795">
    <property type="hits" value="3 hits in 76 CRISPR screens"/>
</dbReference>
<dbReference type="ChiTaRS" id="Tbc1d9b">
    <property type="organism name" value="mouse"/>
</dbReference>
<dbReference type="PRO" id="PR:Q5SVR0"/>
<dbReference type="Proteomes" id="UP000000589">
    <property type="component" value="Chromosome 11"/>
</dbReference>
<dbReference type="RNAct" id="Q5SVR0">
    <property type="molecule type" value="protein"/>
</dbReference>
<dbReference type="Bgee" id="ENSMUSG00000036644">
    <property type="expression patterns" value="Expressed in ear vesicle and 226 other cell types or tissues"/>
</dbReference>
<dbReference type="GO" id="GO:0016020">
    <property type="term" value="C:membrane"/>
    <property type="evidence" value="ECO:0007669"/>
    <property type="project" value="UniProtKB-SubCell"/>
</dbReference>
<dbReference type="GO" id="GO:0005509">
    <property type="term" value="F:calcium ion binding"/>
    <property type="evidence" value="ECO:0007669"/>
    <property type="project" value="InterPro"/>
</dbReference>
<dbReference type="GO" id="GO:0005096">
    <property type="term" value="F:GTPase activator activity"/>
    <property type="evidence" value="ECO:0007669"/>
    <property type="project" value="UniProtKB-KW"/>
</dbReference>
<dbReference type="CDD" id="cd13351">
    <property type="entry name" value="PH-GRAM1_TCB1D9_TCB1D9B"/>
    <property type="match status" value="1"/>
</dbReference>
<dbReference type="CDD" id="cd13354">
    <property type="entry name" value="PH-GRAM2_TCB1D9_TCB1D9B"/>
    <property type="match status" value="1"/>
</dbReference>
<dbReference type="FunFam" id="2.30.29.30:FF:000013">
    <property type="entry name" value="Putative TBC1 domain family member 8B"/>
    <property type="match status" value="1"/>
</dbReference>
<dbReference type="FunFam" id="2.30.29.30:FF:000041">
    <property type="entry name" value="TBC1 domain family member 9 isoform X1"/>
    <property type="match status" value="1"/>
</dbReference>
<dbReference type="FunFam" id="1.10.8.270:FF:000002">
    <property type="entry name" value="TBC1 domain family member 9B"/>
    <property type="match status" value="1"/>
</dbReference>
<dbReference type="FunFam" id="1.10.238.10:FF:000130">
    <property type="entry name" value="TBC1 domain family member 9B isoform X1"/>
    <property type="match status" value="1"/>
</dbReference>
<dbReference type="FunFam" id="1.10.472.80:FF:000033">
    <property type="entry name" value="TBC1 domain family member 9B isoform X1"/>
    <property type="match status" value="1"/>
</dbReference>
<dbReference type="Gene3D" id="1.10.238.10">
    <property type="entry name" value="EF-hand"/>
    <property type="match status" value="1"/>
</dbReference>
<dbReference type="Gene3D" id="2.30.29.30">
    <property type="entry name" value="Pleckstrin-homology domain (PH domain)/Phosphotyrosine-binding domain (PTB)"/>
    <property type="match status" value="2"/>
</dbReference>
<dbReference type="Gene3D" id="1.10.8.270">
    <property type="entry name" value="putative rabgap domain of human tbc1 domain family member 14 like domains"/>
    <property type="match status" value="1"/>
</dbReference>
<dbReference type="Gene3D" id="1.10.10.750">
    <property type="entry name" value="Ypt/Rab-GAP domain of gyp1p, domain 1"/>
    <property type="match status" value="1"/>
</dbReference>
<dbReference type="Gene3D" id="1.10.472.80">
    <property type="entry name" value="Ypt/Rab-GAP domain of gyp1p, domain 3"/>
    <property type="match status" value="1"/>
</dbReference>
<dbReference type="InterPro" id="IPR011992">
    <property type="entry name" value="EF-hand-dom_pair"/>
</dbReference>
<dbReference type="InterPro" id="IPR002048">
    <property type="entry name" value="EF_hand_dom"/>
</dbReference>
<dbReference type="InterPro" id="IPR004182">
    <property type="entry name" value="GRAM"/>
</dbReference>
<dbReference type="InterPro" id="IPR011993">
    <property type="entry name" value="PH-like_dom_sf"/>
</dbReference>
<dbReference type="InterPro" id="IPR000195">
    <property type="entry name" value="Rab-GAP-TBC_dom"/>
</dbReference>
<dbReference type="InterPro" id="IPR035969">
    <property type="entry name" value="Rab-GAP_TBC_sf"/>
</dbReference>
<dbReference type="InterPro" id="IPR036014">
    <property type="entry name" value="TCB1D9/TCB1D9B_PH-GRAM1"/>
</dbReference>
<dbReference type="InterPro" id="IPR036017">
    <property type="entry name" value="TCB1D9/TCB1D9B_PH-GRAM2"/>
</dbReference>
<dbReference type="PANTHER" id="PTHR47666">
    <property type="entry name" value="PROTEIN VASCULAR ASSOCIATED DEATH 1, CHLOROPLASTIC"/>
    <property type="match status" value="1"/>
</dbReference>
<dbReference type="PANTHER" id="PTHR47666:SF5">
    <property type="entry name" value="TBC1 DOMAIN FAMILY MEMBER 9B"/>
    <property type="match status" value="1"/>
</dbReference>
<dbReference type="Pfam" id="PF02893">
    <property type="entry name" value="GRAM"/>
    <property type="match status" value="2"/>
</dbReference>
<dbReference type="Pfam" id="PF00566">
    <property type="entry name" value="RabGAP-TBC"/>
    <property type="match status" value="1"/>
</dbReference>
<dbReference type="SMART" id="SM00054">
    <property type="entry name" value="EFh"/>
    <property type="match status" value="1"/>
</dbReference>
<dbReference type="SMART" id="SM00568">
    <property type="entry name" value="GRAM"/>
    <property type="match status" value="2"/>
</dbReference>
<dbReference type="SMART" id="SM00164">
    <property type="entry name" value="TBC"/>
    <property type="match status" value="1"/>
</dbReference>
<dbReference type="SUPFAM" id="SSF47473">
    <property type="entry name" value="EF-hand"/>
    <property type="match status" value="1"/>
</dbReference>
<dbReference type="SUPFAM" id="SSF47923">
    <property type="entry name" value="Ypt/Rab-GAP domain of gyp1p"/>
    <property type="match status" value="2"/>
</dbReference>
<dbReference type="PROSITE" id="PS50222">
    <property type="entry name" value="EF_HAND_2"/>
    <property type="match status" value="1"/>
</dbReference>
<dbReference type="PROSITE" id="PS50086">
    <property type="entry name" value="TBC_RABGAP"/>
    <property type="match status" value="1"/>
</dbReference>
<protein>
    <recommendedName>
        <fullName>TBC1 domain family member 9B</fullName>
    </recommendedName>
</protein>
<accession>Q5SVR0</accession>
<accession>Q3UGF5</accession>
<accession>Q6A019</accession>
<accession>Q6P1G9</accession>
<accession>Q6PDP2</accession>
<accession>Q80ZU6</accession>
<accession>Q8C7K9</accession>
<accession>Q8CBR7</accession>
<accession>Q8CCW2</accession>
<accession>Q9CSQ2</accession>
<sequence length="1263" mass="141779">MWLGPEEVLVANALWVTERANPFFVLQRRRGHGKGGGLTGLLVGTLDVVLDSSARVAPYRILHQTQDSQVYWIVACGSSRKEITKHWEWLENNLLQTLSIFDNEEDITTFVKGKIHGIIAEENKNLQPQGDEDPGKFKEAELKMRKQFGMPEGEKLVNYYSCNFWKGRVPRQGWLYLTVNHLCFYSFLLGKEVSLVVQWVDVTRLEKNATLLFPESIRVDTRDQELFFSMFLNIGETFKLMEQLANLAMRQLLDSEGFLEDKALPRPIRPHKNISALKRDLDARAKNECYRATFRLPKDERLDGHTGCTLWTPFNKLHIPGQMFISNNYICFASKEEDACRLIIPLREVTIVEKADSSSVLPSPLSISTKSKMTFLFANLKDRDFLVQRISDFLQKTPSKQTGSSIGGTKASVSDPAPESLPTPQEASEPPASPSSPLSSPPSFSTQEIPTTSQGLLKVFQKNSPMEDLGAKGAKEKMKEESWNIHFFEYGRGMCMYRTAKTRELVLKGIPESLRGELWLLFSGAWNEMVTHPGYYAELVEKSLGKYSLATEEIERDLHRSMPEHPAFQNELGIAALRRVLTAYAFRNPTIGYCQAMNIVTSVLLLYGSEEEAFWLLVALCERMLPDYYNTRVVGALVDQGIFEELTRDVLPRLSEKMQELGVISSISLSWFLTLFLSVMPFESAVVIVDCFFYEGIKVILQVALAVLDANVEQLLDCNDEGEAMTVLGRYLDNVVNKQSISPPIPHLHALLTSGDDPPVEVDIFDLLRVSYEKFSNLRADDIEQMRFKQRLKVIQSLEDTAKRSVVRAIPGDIGFSIEELEDLYMVFKAKHLASQYWGGNRSAAVHRDPSLPYLEQYRIDASQFRELFASLTPWACGSHTPVLAGRMFRLLDQNKDSLINFKEFVTGMSGMYHGDLTEKLKALYKLHLPPALIPEEAESALEAAHYFTEDSSSEASPLASDLDLFLPWEAQALLQEQQEGSGNEDTPERREEKGTSPPDYRHYLRMWAKEKEAQKETIKDLPKMNQEQFIELCKTLYNMFSEDPMEQDLYHAIATVASLLLRIGEVGKKFSALTTKKPRDGAHSGDPNSATEEDEPPTPKLHQDPTQECQPPAAGDRQAKASGDMHLGKALQDSHVIVEGGSGEGQGSPSLLLSDDETKDDMSMSSYSVVSTGSLQCEDLTEDTVLVGGGACSPTATSRAGGTVDTDWCISFEQILASILTESVLVNFFEKRVDIGLKIKDQKKVERQFSTSSDHEPPGVLG</sequence>
<proteinExistence type="evidence at protein level"/>
<feature type="chain" id="PRO_0000288502" description="TBC1 domain family member 9B">
    <location>
        <begin position="1"/>
        <end position="1263"/>
    </location>
</feature>
<feature type="transmembrane region" description="Helical" evidence="3">
    <location>
        <begin position="669"/>
        <end position="689"/>
    </location>
</feature>
<feature type="domain" description="GRAM 1">
    <location>
        <begin position="142"/>
        <end position="209"/>
    </location>
</feature>
<feature type="domain" description="GRAM 2">
    <location>
        <begin position="288"/>
        <end position="356"/>
    </location>
</feature>
<feature type="domain" description="Rab-GAP TBC" evidence="4">
    <location>
        <begin position="509"/>
        <end position="696"/>
    </location>
</feature>
<feature type="domain" description="EF-hand" evidence="5">
    <location>
        <begin position="880"/>
        <end position="915"/>
    </location>
</feature>
<feature type="region of interest" description="Disordered" evidence="6">
    <location>
        <begin position="397"/>
        <end position="449"/>
    </location>
</feature>
<feature type="region of interest" description="Disordered" evidence="6">
    <location>
        <begin position="977"/>
        <end position="1002"/>
    </location>
</feature>
<feature type="region of interest" description="Disordered" evidence="6">
    <location>
        <begin position="1075"/>
        <end position="1126"/>
    </location>
</feature>
<feature type="region of interest" description="Disordered" evidence="6">
    <location>
        <begin position="1139"/>
        <end position="1159"/>
    </location>
</feature>
<feature type="compositionally biased region" description="Low complexity" evidence="6">
    <location>
        <begin position="422"/>
        <end position="447"/>
    </location>
</feature>
<feature type="compositionally biased region" description="Basic and acidic residues" evidence="6">
    <location>
        <begin position="987"/>
        <end position="1002"/>
    </location>
</feature>
<feature type="site" description="Arginine finger" evidence="1">
    <location>
        <position position="556"/>
    </location>
</feature>
<feature type="site" description="Glutamine finger" evidence="1">
    <location>
        <position position="595"/>
    </location>
</feature>
<feature type="modified residue" description="Phosphothreonine" evidence="2">
    <location>
        <position position="397"/>
    </location>
</feature>
<feature type="modified residue" description="Phosphoserine" evidence="2">
    <location>
        <position position="412"/>
    </location>
</feature>
<feature type="modified residue" description="Phosphoserine" evidence="2">
    <location>
        <position position="433"/>
    </location>
</feature>
<feature type="modified residue" description="Phosphoserine" evidence="2">
    <location>
        <position position="436"/>
    </location>
</feature>
<feature type="modified residue" description="Phosphoserine" evidence="10">
    <location>
        <position position="464"/>
    </location>
</feature>
<feature type="modified residue" description="Phosphoserine" evidence="2">
    <location>
        <position position="1254"/>
    </location>
</feature>
<feature type="splice variant" id="VSP_025700" description="In isoform 2." evidence="7 8">
    <location>
        <begin position="957"/>
        <end position="973"/>
    </location>
</feature>
<feature type="sequence conflict" description="In Ref. 1; BAD32277." evidence="9" ref="1">
    <original>I</original>
    <variation>T</variation>
    <location>
        <position position="73"/>
    </location>
</feature>
<feature type="sequence conflict" description="In Ref. 1; BAD32277." evidence="9" ref="1">
    <original>SCN</original>
    <variation>PCT</variation>
    <location>
        <begin position="161"/>
        <end position="163"/>
    </location>
</feature>
<feature type="sequence conflict" description="In Ref. 1; BAD32277." evidence="9" ref="1">
    <original>D</original>
    <variation>A</variation>
    <location>
        <position position="415"/>
    </location>
</feature>
<feature type="sequence conflict" description="In Ref. 1; BAD32277." evidence="9" ref="1">
    <location>
        <position position="807"/>
    </location>
</feature>
<feature type="sequence conflict" description="In Ref. 2; BAE28254." evidence="9" ref="2">
    <original>V</original>
    <variation>M</variation>
    <location>
        <position position="1225"/>
    </location>
</feature>
<gene>
    <name type="primary">Tbc1d9b</name>
    <name type="synonym">Kiaa0676</name>
</gene>
<reference key="1">
    <citation type="journal article" date="2004" name="DNA Res.">
        <title>Prediction of the coding sequences of mouse homologues of KIAA gene: IV. The complete nucleotide sequences of 500 mouse KIAA-homologous cDNAs identified by screening of terminal sequences of cDNA clones randomly sampled from size-fractionated libraries.</title>
        <authorList>
            <person name="Okazaki N."/>
            <person name="Kikuno R."/>
            <person name="Ohara R."/>
            <person name="Inamoto S."/>
            <person name="Koseki H."/>
            <person name="Hiraoka S."/>
            <person name="Saga Y."/>
            <person name="Seino S."/>
            <person name="Nishimura M."/>
            <person name="Kaisho T."/>
            <person name="Hoshino K."/>
            <person name="Kitamura H."/>
            <person name="Nagase T."/>
            <person name="Ohara O."/>
            <person name="Koga H."/>
        </authorList>
    </citation>
    <scope>NUCLEOTIDE SEQUENCE [LARGE SCALE MRNA] (ISOFORM 1)</scope>
    <source>
        <tissue>Fetal brain</tissue>
    </source>
</reference>
<reference key="2">
    <citation type="journal article" date="2005" name="Science">
        <title>The transcriptional landscape of the mammalian genome.</title>
        <authorList>
            <person name="Carninci P."/>
            <person name="Kasukawa T."/>
            <person name="Katayama S."/>
            <person name="Gough J."/>
            <person name="Frith M.C."/>
            <person name="Maeda N."/>
            <person name="Oyama R."/>
            <person name="Ravasi T."/>
            <person name="Lenhard B."/>
            <person name="Wells C."/>
            <person name="Kodzius R."/>
            <person name="Shimokawa K."/>
            <person name="Bajic V.B."/>
            <person name="Brenner S.E."/>
            <person name="Batalov S."/>
            <person name="Forrest A.R."/>
            <person name="Zavolan M."/>
            <person name="Davis M.J."/>
            <person name="Wilming L.G."/>
            <person name="Aidinis V."/>
            <person name="Allen J.E."/>
            <person name="Ambesi-Impiombato A."/>
            <person name="Apweiler R."/>
            <person name="Aturaliya R.N."/>
            <person name="Bailey T.L."/>
            <person name="Bansal M."/>
            <person name="Baxter L."/>
            <person name="Beisel K.W."/>
            <person name="Bersano T."/>
            <person name="Bono H."/>
            <person name="Chalk A.M."/>
            <person name="Chiu K.P."/>
            <person name="Choudhary V."/>
            <person name="Christoffels A."/>
            <person name="Clutterbuck D.R."/>
            <person name="Crowe M.L."/>
            <person name="Dalla E."/>
            <person name="Dalrymple B.P."/>
            <person name="de Bono B."/>
            <person name="Della Gatta G."/>
            <person name="di Bernardo D."/>
            <person name="Down T."/>
            <person name="Engstrom P."/>
            <person name="Fagiolini M."/>
            <person name="Faulkner G."/>
            <person name="Fletcher C.F."/>
            <person name="Fukushima T."/>
            <person name="Furuno M."/>
            <person name="Futaki S."/>
            <person name="Gariboldi M."/>
            <person name="Georgii-Hemming P."/>
            <person name="Gingeras T.R."/>
            <person name="Gojobori T."/>
            <person name="Green R.E."/>
            <person name="Gustincich S."/>
            <person name="Harbers M."/>
            <person name="Hayashi Y."/>
            <person name="Hensch T.K."/>
            <person name="Hirokawa N."/>
            <person name="Hill D."/>
            <person name="Huminiecki L."/>
            <person name="Iacono M."/>
            <person name="Ikeo K."/>
            <person name="Iwama A."/>
            <person name="Ishikawa T."/>
            <person name="Jakt M."/>
            <person name="Kanapin A."/>
            <person name="Katoh M."/>
            <person name="Kawasawa Y."/>
            <person name="Kelso J."/>
            <person name="Kitamura H."/>
            <person name="Kitano H."/>
            <person name="Kollias G."/>
            <person name="Krishnan S.P."/>
            <person name="Kruger A."/>
            <person name="Kummerfeld S.K."/>
            <person name="Kurochkin I.V."/>
            <person name="Lareau L.F."/>
            <person name="Lazarevic D."/>
            <person name="Lipovich L."/>
            <person name="Liu J."/>
            <person name="Liuni S."/>
            <person name="McWilliam S."/>
            <person name="Madan Babu M."/>
            <person name="Madera M."/>
            <person name="Marchionni L."/>
            <person name="Matsuda H."/>
            <person name="Matsuzawa S."/>
            <person name="Miki H."/>
            <person name="Mignone F."/>
            <person name="Miyake S."/>
            <person name="Morris K."/>
            <person name="Mottagui-Tabar S."/>
            <person name="Mulder N."/>
            <person name="Nakano N."/>
            <person name="Nakauchi H."/>
            <person name="Ng P."/>
            <person name="Nilsson R."/>
            <person name="Nishiguchi S."/>
            <person name="Nishikawa S."/>
            <person name="Nori F."/>
            <person name="Ohara O."/>
            <person name="Okazaki Y."/>
            <person name="Orlando V."/>
            <person name="Pang K.C."/>
            <person name="Pavan W.J."/>
            <person name="Pavesi G."/>
            <person name="Pesole G."/>
            <person name="Petrovsky N."/>
            <person name="Piazza S."/>
            <person name="Reed J."/>
            <person name="Reid J.F."/>
            <person name="Ring B.Z."/>
            <person name="Ringwald M."/>
            <person name="Rost B."/>
            <person name="Ruan Y."/>
            <person name="Salzberg S.L."/>
            <person name="Sandelin A."/>
            <person name="Schneider C."/>
            <person name="Schoenbach C."/>
            <person name="Sekiguchi K."/>
            <person name="Semple C.A."/>
            <person name="Seno S."/>
            <person name="Sessa L."/>
            <person name="Sheng Y."/>
            <person name="Shibata Y."/>
            <person name="Shimada H."/>
            <person name="Shimada K."/>
            <person name="Silva D."/>
            <person name="Sinclair B."/>
            <person name="Sperling S."/>
            <person name="Stupka E."/>
            <person name="Sugiura K."/>
            <person name="Sultana R."/>
            <person name="Takenaka Y."/>
            <person name="Taki K."/>
            <person name="Tammoja K."/>
            <person name="Tan S.L."/>
            <person name="Tang S."/>
            <person name="Taylor M.S."/>
            <person name="Tegner J."/>
            <person name="Teichmann S.A."/>
            <person name="Ueda H.R."/>
            <person name="van Nimwegen E."/>
            <person name="Verardo R."/>
            <person name="Wei C.L."/>
            <person name="Yagi K."/>
            <person name="Yamanishi H."/>
            <person name="Zabarovsky E."/>
            <person name="Zhu S."/>
            <person name="Zimmer A."/>
            <person name="Hide W."/>
            <person name="Bult C."/>
            <person name="Grimmond S.M."/>
            <person name="Teasdale R.D."/>
            <person name="Liu E.T."/>
            <person name="Brusic V."/>
            <person name="Quackenbush J."/>
            <person name="Wahlestedt C."/>
            <person name="Mattick J.S."/>
            <person name="Hume D.A."/>
            <person name="Kai C."/>
            <person name="Sasaki D."/>
            <person name="Tomaru Y."/>
            <person name="Fukuda S."/>
            <person name="Kanamori-Katayama M."/>
            <person name="Suzuki M."/>
            <person name="Aoki J."/>
            <person name="Arakawa T."/>
            <person name="Iida J."/>
            <person name="Imamura K."/>
            <person name="Itoh M."/>
            <person name="Kato T."/>
            <person name="Kawaji H."/>
            <person name="Kawagashira N."/>
            <person name="Kawashima T."/>
            <person name="Kojima M."/>
            <person name="Kondo S."/>
            <person name="Konno H."/>
            <person name="Nakano K."/>
            <person name="Ninomiya N."/>
            <person name="Nishio T."/>
            <person name="Okada M."/>
            <person name="Plessy C."/>
            <person name="Shibata K."/>
            <person name="Shiraki T."/>
            <person name="Suzuki S."/>
            <person name="Tagami M."/>
            <person name="Waki K."/>
            <person name="Watahiki A."/>
            <person name="Okamura-Oho Y."/>
            <person name="Suzuki H."/>
            <person name="Kawai J."/>
            <person name="Hayashizaki Y."/>
        </authorList>
    </citation>
    <scope>NUCLEOTIDE SEQUENCE [LARGE SCALE MRNA] (ISOFORMS 1 AND 2)</scope>
    <source>
        <strain>C57BL/6J</strain>
        <tissue>Embryo</tissue>
        <tissue>Hippocampus</tissue>
        <tissue>Medulla oblongata</tissue>
        <tissue>Melanocyte</tissue>
        <tissue>Urinary bladder</tissue>
    </source>
</reference>
<reference key="3">
    <citation type="journal article" date="2009" name="PLoS Biol.">
        <title>Lineage-specific biology revealed by a finished genome assembly of the mouse.</title>
        <authorList>
            <person name="Church D.M."/>
            <person name="Goodstadt L."/>
            <person name="Hillier L.W."/>
            <person name="Zody M.C."/>
            <person name="Goldstein S."/>
            <person name="She X."/>
            <person name="Bult C.J."/>
            <person name="Agarwala R."/>
            <person name="Cherry J.L."/>
            <person name="DiCuccio M."/>
            <person name="Hlavina W."/>
            <person name="Kapustin Y."/>
            <person name="Meric P."/>
            <person name="Maglott D."/>
            <person name="Birtle Z."/>
            <person name="Marques A.C."/>
            <person name="Graves T."/>
            <person name="Zhou S."/>
            <person name="Teague B."/>
            <person name="Potamousis K."/>
            <person name="Churas C."/>
            <person name="Place M."/>
            <person name="Herschleb J."/>
            <person name="Runnheim R."/>
            <person name="Forrest D."/>
            <person name="Amos-Landgraf J."/>
            <person name="Schwartz D.C."/>
            <person name="Cheng Z."/>
            <person name="Lindblad-Toh K."/>
            <person name="Eichler E.E."/>
            <person name="Ponting C.P."/>
        </authorList>
    </citation>
    <scope>NUCLEOTIDE SEQUENCE [LARGE SCALE GENOMIC DNA]</scope>
    <source>
        <strain>C57BL/6J</strain>
    </source>
</reference>
<reference key="4">
    <citation type="journal article" date="2004" name="Genome Res.">
        <title>The status, quality, and expansion of the NIH full-length cDNA project: the Mammalian Gene Collection (MGC).</title>
        <authorList>
            <consortium name="The MGC Project Team"/>
        </authorList>
    </citation>
    <scope>NUCLEOTIDE SEQUENCE [LARGE SCALE MRNA] (ISOFORM 2)</scope>
    <scope>NUCLEOTIDE SEQUENCE [LARGE SCALE MRNA] OF 797-1263 (ISOFORM 1)</scope>
    <source>
        <tissue>Brain</tissue>
        <tissue>Eye</tissue>
        <tissue>Olfactory epithelium</tissue>
    </source>
</reference>
<reference key="5">
    <citation type="journal article" date="2010" name="Cell">
        <title>A tissue-specific atlas of mouse protein phosphorylation and expression.</title>
        <authorList>
            <person name="Huttlin E.L."/>
            <person name="Jedrychowski M.P."/>
            <person name="Elias J.E."/>
            <person name="Goswami T."/>
            <person name="Rad R."/>
            <person name="Beausoleil S.A."/>
            <person name="Villen J."/>
            <person name="Haas W."/>
            <person name="Sowa M.E."/>
            <person name="Gygi S.P."/>
        </authorList>
    </citation>
    <scope>PHOSPHORYLATION [LARGE SCALE ANALYSIS] AT SER-464</scope>
    <scope>IDENTIFICATION BY MASS SPECTROMETRY [LARGE SCALE ANALYSIS]</scope>
    <source>
        <tissue>Brain</tissue>
        <tissue>Brown adipose tissue</tissue>
        <tissue>Heart</tissue>
        <tissue>Kidney</tissue>
        <tissue>Liver</tissue>
        <tissue>Lung</tissue>
        <tissue>Pancreas</tissue>
        <tissue>Spleen</tissue>
        <tissue>Testis</tissue>
    </source>
</reference>